<sequence>MDYEALKDQWSDVEDRDGIRLSWNTFPSSRMEASRLVVPIGAVYTPLKEKPDSPLLQYEPVTCKAPCRAVLNPYANVDVRARIWICPFCLMRNPLPPHYKDITESTIPPELHPMSTTIEYQLARPAPAPPIFVYVVDTCQDDDSLKALKDSLIMSLSLLPVNALVGLITYGTMAQVHELGYTECAKSYVFRGSKEYAAKQVQEMLGLASGLRPNMPQQPARPPLGPAARFLLPVQQAEFQITNVLEQLQRDPWPVANDKRPLRCTGVALSVAVGLLETSFQNAGGRIMVFTSGPATEGPGHVVGPELKEPIRSHHDIDRDNIKYYKKAVKFYDNMAKRAANNGHIVDVFAGCLDQVGMLEMKNLANYTGGHILLTDSFTSSQFKQSFVRIFDKDAKDNLLMGFNASLEVLTTKELKVTGLIGHAVSLNKKSSSVGETECGIGNTCAWKMCGIDPASSYGVYFEIANQGGPAAVQPGPQRGMMQFLTYYQHSSGHYHLRVTTVARPLSGPAGDPTLAQSFDQEAAAVLMARIAVFKAEVDDGPDVLRWVDRMLIRLCSRFADYRKDDPTSFRLEKNFTLYPQFMFHLRRSQFLQVFNNSPDETAFYRHVLNHEDVGDSLVMIQPTLDSYSLEHEGSQPVLLDSASIQPAHILLLDTFFHILIFHGETIAEWRKAGYQDQEGYENLKVLLEQPKEDARELISDRFPLPRFIVCDAGGSQARFLLSKLNPSTTHTTGGYGGGVTSQIIFTDDVSLQTFMDHLMKLAVSGTS</sequence>
<keyword id="KW-0963">Cytoplasm</keyword>
<keyword id="KW-0968">Cytoplasmic vesicle</keyword>
<keyword id="KW-0256">Endoplasmic reticulum</keyword>
<keyword id="KW-0931">ER-Golgi transport</keyword>
<keyword id="KW-0333">Golgi apparatus</keyword>
<keyword id="KW-0472">Membrane</keyword>
<keyword id="KW-0479">Metal-binding</keyword>
<keyword id="KW-0653">Protein transport</keyword>
<keyword id="KW-1185">Reference proteome</keyword>
<keyword id="KW-0813">Transport</keyword>
<keyword id="KW-0862">Zinc</keyword>
<protein>
    <recommendedName>
        <fullName>Protein transport protein sec23</fullName>
    </recommendedName>
</protein>
<feature type="chain" id="PRO_0000295452" description="Protein transport protein sec23">
    <location>
        <begin position="1"/>
        <end position="768"/>
    </location>
</feature>
<feature type="binding site" evidence="1">
    <location>
        <position position="63"/>
    </location>
    <ligand>
        <name>Zn(2+)</name>
        <dbReference type="ChEBI" id="CHEBI:29105"/>
    </ligand>
</feature>
<feature type="binding site" evidence="1">
    <location>
        <position position="67"/>
    </location>
    <ligand>
        <name>Zn(2+)</name>
        <dbReference type="ChEBI" id="CHEBI:29105"/>
    </ligand>
</feature>
<feature type="binding site" evidence="1">
    <location>
        <position position="86"/>
    </location>
    <ligand>
        <name>Zn(2+)</name>
        <dbReference type="ChEBI" id="CHEBI:29105"/>
    </ligand>
</feature>
<feature type="binding site" evidence="1">
    <location>
        <position position="89"/>
    </location>
    <ligand>
        <name>Zn(2+)</name>
        <dbReference type="ChEBI" id="CHEBI:29105"/>
    </ligand>
</feature>
<proteinExistence type="inferred from homology"/>
<accession>A2Q8L1</accession>
<organism>
    <name type="scientific">Aspergillus niger (strain ATCC MYA-4892 / CBS 513.88 / FGSC A1513)</name>
    <dbReference type="NCBI Taxonomy" id="425011"/>
    <lineage>
        <taxon>Eukaryota</taxon>
        <taxon>Fungi</taxon>
        <taxon>Dikarya</taxon>
        <taxon>Ascomycota</taxon>
        <taxon>Pezizomycotina</taxon>
        <taxon>Eurotiomycetes</taxon>
        <taxon>Eurotiomycetidae</taxon>
        <taxon>Eurotiales</taxon>
        <taxon>Aspergillaceae</taxon>
        <taxon>Aspergillus</taxon>
        <taxon>Aspergillus subgen. Circumdati</taxon>
    </lineage>
</organism>
<dbReference type="EMBL" id="AM269963">
    <property type="protein sequence ID" value="CAK37008.1"/>
    <property type="molecule type" value="Genomic_DNA"/>
</dbReference>
<dbReference type="RefSeq" id="XP_001388900.1">
    <property type="nucleotide sequence ID" value="XM_001388863.2"/>
</dbReference>
<dbReference type="SMR" id="A2Q8L1"/>
<dbReference type="EnsemblFungi" id="CAK37008">
    <property type="protein sequence ID" value="CAK37008"/>
    <property type="gene ID" value="An01g04730"/>
</dbReference>
<dbReference type="GeneID" id="4977081"/>
<dbReference type="KEGG" id="ang:An01g04730"/>
<dbReference type="VEuPathDB" id="FungiDB:An01g04730"/>
<dbReference type="HOGENOM" id="CLU_008658_3_0_1"/>
<dbReference type="Proteomes" id="UP000006706">
    <property type="component" value="Chromosome 2R"/>
</dbReference>
<dbReference type="GO" id="GO:0030127">
    <property type="term" value="C:COPII vesicle coat"/>
    <property type="evidence" value="ECO:0007669"/>
    <property type="project" value="InterPro"/>
</dbReference>
<dbReference type="GO" id="GO:0070971">
    <property type="term" value="C:endoplasmic reticulum exit site"/>
    <property type="evidence" value="ECO:0007669"/>
    <property type="project" value="TreeGrafter"/>
</dbReference>
<dbReference type="GO" id="GO:0005789">
    <property type="term" value="C:endoplasmic reticulum membrane"/>
    <property type="evidence" value="ECO:0007669"/>
    <property type="project" value="UniProtKB-SubCell"/>
</dbReference>
<dbReference type="GO" id="GO:0000139">
    <property type="term" value="C:Golgi membrane"/>
    <property type="evidence" value="ECO:0007669"/>
    <property type="project" value="UniProtKB-SubCell"/>
</dbReference>
<dbReference type="GO" id="GO:0005096">
    <property type="term" value="F:GTPase activator activity"/>
    <property type="evidence" value="ECO:0007669"/>
    <property type="project" value="TreeGrafter"/>
</dbReference>
<dbReference type="GO" id="GO:0008270">
    <property type="term" value="F:zinc ion binding"/>
    <property type="evidence" value="ECO:0007669"/>
    <property type="project" value="InterPro"/>
</dbReference>
<dbReference type="GO" id="GO:0090110">
    <property type="term" value="P:COPII-coated vesicle cargo loading"/>
    <property type="evidence" value="ECO:0007669"/>
    <property type="project" value="TreeGrafter"/>
</dbReference>
<dbReference type="GO" id="GO:0006886">
    <property type="term" value="P:intracellular protein transport"/>
    <property type="evidence" value="ECO:0007669"/>
    <property type="project" value="InterPro"/>
</dbReference>
<dbReference type="CDD" id="cd01478">
    <property type="entry name" value="Sec23-like"/>
    <property type="match status" value="1"/>
</dbReference>
<dbReference type="CDD" id="cd11287">
    <property type="entry name" value="Sec23_C"/>
    <property type="match status" value="1"/>
</dbReference>
<dbReference type="FunFam" id="1.20.120.730:FF:000001">
    <property type="entry name" value="Protein transport protein SEC23"/>
    <property type="match status" value="1"/>
</dbReference>
<dbReference type="FunFam" id="2.30.30.380:FF:000001">
    <property type="entry name" value="Protein transport protein SEC23"/>
    <property type="match status" value="1"/>
</dbReference>
<dbReference type="FunFam" id="3.40.20.10:FF:000006">
    <property type="entry name" value="Protein transport protein SEC23"/>
    <property type="match status" value="1"/>
</dbReference>
<dbReference type="FunFam" id="3.40.50.410:FF:000008">
    <property type="entry name" value="Protein transport protein SEC23"/>
    <property type="match status" value="1"/>
</dbReference>
<dbReference type="Gene3D" id="2.60.40.1670">
    <property type="entry name" value="beta-sandwich domain of Sec23/24"/>
    <property type="match status" value="1"/>
</dbReference>
<dbReference type="Gene3D" id="1.20.120.730">
    <property type="entry name" value="Sec23/Sec24 helical domain"/>
    <property type="match status" value="1"/>
</dbReference>
<dbReference type="Gene3D" id="3.40.20.10">
    <property type="entry name" value="Severin"/>
    <property type="match status" value="1"/>
</dbReference>
<dbReference type="Gene3D" id="3.40.50.410">
    <property type="entry name" value="von Willebrand factor, type A domain"/>
    <property type="match status" value="1"/>
</dbReference>
<dbReference type="Gene3D" id="2.30.30.380">
    <property type="entry name" value="Zn-finger domain of Sec23/24"/>
    <property type="match status" value="1"/>
</dbReference>
<dbReference type="InterPro" id="IPR029006">
    <property type="entry name" value="ADF-H/Gelsolin-like_dom_sf"/>
</dbReference>
<dbReference type="InterPro" id="IPR007123">
    <property type="entry name" value="Gelsolin-like_dom"/>
</dbReference>
<dbReference type="InterPro" id="IPR036180">
    <property type="entry name" value="Gelsolin-like_dom_sf"/>
</dbReference>
<dbReference type="InterPro" id="IPR037364">
    <property type="entry name" value="Sec23"/>
</dbReference>
<dbReference type="InterPro" id="IPR006900">
    <property type="entry name" value="Sec23/24_helical_dom"/>
</dbReference>
<dbReference type="InterPro" id="IPR036175">
    <property type="entry name" value="Sec23/24_helical_dom_sf"/>
</dbReference>
<dbReference type="InterPro" id="IPR006896">
    <property type="entry name" value="Sec23/24_trunk_dom"/>
</dbReference>
<dbReference type="InterPro" id="IPR012990">
    <property type="entry name" value="Sec23_24_beta_S"/>
</dbReference>
<dbReference type="InterPro" id="IPR037550">
    <property type="entry name" value="Sec23_C"/>
</dbReference>
<dbReference type="InterPro" id="IPR036465">
    <property type="entry name" value="vWFA_dom_sf"/>
</dbReference>
<dbReference type="InterPro" id="IPR006895">
    <property type="entry name" value="Znf_Sec23_Sec24"/>
</dbReference>
<dbReference type="InterPro" id="IPR036174">
    <property type="entry name" value="Znf_Sec23_Sec24_sf"/>
</dbReference>
<dbReference type="PANTHER" id="PTHR11141">
    <property type="entry name" value="PROTEIN TRANSPORT PROTEIN SEC23"/>
    <property type="match status" value="1"/>
</dbReference>
<dbReference type="PANTHER" id="PTHR11141:SF0">
    <property type="entry name" value="PROTEIN TRANSPORT PROTEIN SEC23"/>
    <property type="match status" value="1"/>
</dbReference>
<dbReference type="Pfam" id="PF00626">
    <property type="entry name" value="Gelsolin"/>
    <property type="match status" value="1"/>
</dbReference>
<dbReference type="Pfam" id="PF08033">
    <property type="entry name" value="Sec23_BS"/>
    <property type="match status" value="1"/>
</dbReference>
<dbReference type="Pfam" id="PF04815">
    <property type="entry name" value="Sec23_helical"/>
    <property type="match status" value="1"/>
</dbReference>
<dbReference type="Pfam" id="PF04811">
    <property type="entry name" value="Sec23_trunk"/>
    <property type="match status" value="1"/>
</dbReference>
<dbReference type="Pfam" id="PF04810">
    <property type="entry name" value="zf-Sec23_Sec24"/>
    <property type="match status" value="1"/>
</dbReference>
<dbReference type="SUPFAM" id="SSF81995">
    <property type="entry name" value="beta-sandwich domain of Sec23/24"/>
    <property type="match status" value="1"/>
</dbReference>
<dbReference type="SUPFAM" id="SSF82754">
    <property type="entry name" value="C-terminal, gelsolin-like domain of Sec23/24"/>
    <property type="match status" value="1"/>
</dbReference>
<dbReference type="SUPFAM" id="SSF81811">
    <property type="entry name" value="Helical domain of Sec23/24"/>
    <property type="match status" value="1"/>
</dbReference>
<dbReference type="SUPFAM" id="SSF53300">
    <property type="entry name" value="vWA-like"/>
    <property type="match status" value="1"/>
</dbReference>
<dbReference type="SUPFAM" id="SSF82919">
    <property type="entry name" value="Zn-finger domain of Sec23/24"/>
    <property type="match status" value="1"/>
</dbReference>
<evidence type="ECO:0000250" key="1"/>
<evidence type="ECO:0000305" key="2"/>
<comment type="function">
    <text evidence="1">Component of the coat protein complex II (COPII) which promotes the formation of transport vesicles from the endoplasmic reticulum (ER). The coat has two main functions, the physical deformation of the endoplasmic reticulum membrane into vesicles and the selection of cargo molecules (By similarity).</text>
</comment>
<comment type="subunit">
    <text evidence="1">The COPII coat is composed of at least 5 proteins: the sec23/24 complex, the sec13/31 complex, and the protein sar1.</text>
</comment>
<comment type="subcellular location">
    <subcellularLocation>
        <location evidence="1">Cytoplasm</location>
    </subcellularLocation>
    <subcellularLocation>
        <location evidence="1">Cytoplasmic vesicle</location>
        <location evidence="1">COPII-coated vesicle membrane</location>
        <topology evidence="1">Peripheral membrane protein</topology>
        <orientation evidence="1">Cytoplasmic side</orientation>
    </subcellularLocation>
    <subcellularLocation>
        <location evidence="1">Endoplasmic reticulum membrane</location>
        <topology evidence="1">Peripheral membrane protein</topology>
        <orientation evidence="1">Cytoplasmic side</orientation>
    </subcellularLocation>
    <subcellularLocation>
        <location evidence="1">Golgi apparatus membrane</location>
        <topology evidence="1">Peripheral membrane protein</topology>
        <orientation evidence="1">Cytoplasmic side</orientation>
    </subcellularLocation>
</comment>
<comment type="similarity">
    <text evidence="2">Belongs to the SEC23/SEC24 family. SEC23 subfamily.</text>
</comment>
<reference key="1">
    <citation type="journal article" date="2007" name="Nat. Biotechnol.">
        <title>Genome sequencing and analysis of the versatile cell factory Aspergillus niger CBS 513.88.</title>
        <authorList>
            <person name="Pel H.J."/>
            <person name="de Winde J.H."/>
            <person name="Archer D.B."/>
            <person name="Dyer P.S."/>
            <person name="Hofmann G."/>
            <person name="Schaap P.J."/>
            <person name="Turner G."/>
            <person name="de Vries R.P."/>
            <person name="Albang R."/>
            <person name="Albermann K."/>
            <person name="Andersen M.R."/>
            <person name="Bendtsen J.D."/>
            <person name="Benen J.A.E."/>
            <person name="van den Berg M."/>
            <person name="Breestraat S."/>
            <person name="Caddick M.X."/>
            <person name="Contreras R."/>
            <person name="Cornell M."/>
            <person name="Coutinho P.M."/>
            <person name="Danchin E.G.J."/>
            <person name="Debets A.J.M."/>
            <person name="Dekker P."/>
            <person name="van Dijck P.W.M."/>
            <person name="van Dijk A."/>
            <person name="Dijkhuizen L."/>
            <person name="Driessen A.J.M."/>
            <person name="d'Enfert C."/>
            <person name="Geysens S."/>
            <person name="Goosen C."/>
            <person name="Groot G.S.P."/>
            <person name="de Groot P.W.J."/>
            <person name="Guillemette T."/>
            <person name="Henrissat B."/>
            <person name="Herweijer M."/>
            <person name="van den Hombergh J.P.T.W."/>
            <person name="van den Hondel C.A.M.J.J."/>
            <person name="van der Heijden R.T.J.M."/>
            <person name="van der Kaaij R.M."/>
            <person name="Klis F.M."/>
            <person name="Kools H.J."/>
            <person name="Kubicek C.P."/>
            <person name="van Kuyk P.A."/>
            <person name="Lauber J."/>
            <person name="Lu X."/>
            <person name="van der Maarel M.J.E.C."/>
            <person name="Meulenberg R."/>
            <person name="Menke H."/>
            <person name="Mortimer M.A."/>
            <person name="Nielsen J."/>
            <person name="Oliver S.G."/>
            <person name="Olsthoorn M."/>
            <person name="Pal K."/>
            <person name="van Peij N.N.M.E."/>
            <person name="Ram A.F.J."/>
            <person name="Rinas U."/>
            <person name="Roubos J.A."/>
            <person name="Sagt C.M.J."/>
            <person name="Schmoll M."/>
            <person name="Sun J."/>
            <person name="Ussery D."/>
            <person name="Varga J."/>
            <person name="Vervecken W."/>
            <person name="van de Vondervoort P.J.J."/>
            <person name="Wedler H."/>
            <person name="Woesten H.A.B."/>
            <person name="Zeng A.-P."/>
            <person name="van Ooyen A.J.J."/>
            <person name="Visser J."/>
            <person name="Stam H."/>
        </authorList>
    </citation>
    <scope>NUCLEOTIDE SEQUENCE [LARGE SCALE GENOMIC DNA]</scope>
    <source>
        <strain>ATCC MYA-4892 / CBS 513.88 / FGSC A1513</strain>
    </source>
</reference>
<gene>
    <name type="primary">sec23</name>
    <name type="ORF">An01g04730</name>
</gene>
<name>SEC23_ASPNC</name>